<organism>
    <name type="scientific">Dictyostelium discoideum</name>
    <name type="common">Social amoeba</name>
    <dbReference type="NCBI Taxonomy" id="44689"/>
    <lineage>
        <taxon>Eukaryota</taxon>
        <taxon>Amoebozoa</taxon>
        <taxon>Evosea</taxon>
        <taxon>Eumycetozoa</taxon>
        <taxon>Dictyostelia</taxon>
        <taxon>Dictyosteliales</taxon>
        <taxon>Dictyosteliaceae</taxon>
        <taxon>Dictyostelium</taxon>
    </lineage>
</organism>
<evidence type="ECO:0000255" key="1"/>
<evidence type="ECO:0000305" key="2"/>
<keyword id="KW-0067">ATP-binding</keyword>
<keyword id="KW-0210">Decarboxylase</keyword>
<keyword id="KW-0312">Gluconeogenesis</keyword>
<keyword id="KW-0456">Lyase</keyword>
<keyword id="KW-0547">Nucleotide-binding</keyword>
<keyword id="KW-1185">Reference proteome</keyword>
<reference key="1">
    <citation type="journal article" date="2002" name="Nature">
        <title>Sequence and analysis of chromosome 2 of Dictyostelium discoideum.</title>
        <authorList>
            <person name="Gloeckner G."/>
            <person name="Eichinger L."/>
            <person name="Szafranski K."/>
            <person name="Pachebat J.A."/>
            <person name="Bankier A.T."/>
            <person name="Dear P.H."/>
            <person name="Lehmann R."/>
            <person name="Baumgart C."/>
            <person name="Parra G."/>
            <person name="Abril J.F."/>
            <person name="Guigo R."/>
            <person name="Kumpf K."/>
            <person name="Tunggal B."/>
            <person name="Cox E.C."/>
            <person name="Quail M.A."/>
            <person name="Platzer M."/>
            <person name="Rosenthal A."/>
            <person name="Noegel A.A."/>
        </authorList>
    </citation>
    <scope>NUCLEOTIDE SEQUENCE [LARGE SCALE GENOMIC DNA]</scope>
    <source>
        <strain>AX4</strain>
    </source>
</reference>
<reference key="2">
    <citation type="journal article" date="2005" name="Nature">
        <title>The genome of the social amoeba Dictyostelium discoideum.</title>
        <authorList>
            <person name="Eichinger L."/>
            <person name="Pachebat J.A."/>
            <person name="Gloeckner G."/>
            <person name="Rajandream M.A."/>
            <person name="Sucgang R."/>
            <person name="Berriman M."/>
            <person name="Song J."/>
            <person name="Olsen R."/>
            <person name="Szafranski K."/>
            <person name="Xu Q."/>
            <person name="Tunggal B."/>
            <person name="Kummerfeld S."/>
            <person name="Madera M."/>
            <person name="Konfortov B.A."/>
            <person name="Rivero F."/>
            <person name="Bankier A.T."/>
            <person name="Lehmann R."/>
            <person name="Hamlin N."/>
            <person name="Davies R."/>
            <person name="Gaudet P."/>
            <person name="Fey P."/>
            <person name="Pilcher K."/>
            <person name="Chen G."/>
            <person name="Saunders D."/>
            <person name="Sodergren E.J."/>
            <person name="Davis P."/>
            <person name="Kerhornou A."/>
            <person name="Nie X."/>
            <person name="Hall N."/>
            <person name="Anjard C."/>
            <person name="Hemphill L."/>
            <person name="Bason N."/>
            <person name="Farbrother P."/>
            <person name="Desany B."/>
            <person name="Just E."/>
            <person name="Morio T."/>
            <person name="Rost R."/>
            <person name="Churcher C.M."/>
            <person name="Cooper J."/>
            <person name="Haydock S."/>
            <person name="van Driessche N."/>
            <person name="Cronin A."/>
            <person name="Goodhead I."/>
            <person name="Muzny D.M."/>
            <person name="Mourier T."/>
            <person name="Pain A."/>
            <person name="Lu M."/>
            <person name="Harper D."/>
            <person name="Lindsay R."/>
            <person name="Hauser H."/>
            <person name="James K.D."/>
            <person name="Quiles M."/>
            <person name="Madan Babu M."/>
            <person name="Saito T."/>
            <person name="Buchrieser C."/>
            <person name="Wardroper A."/>
            <person name="Felder M."/>
            <person name="Thangavelu M."/>
            <person name="Johnson D."/>
            <person name="Knights A."/>
            <person name="Loulseged H."/>
            <person name="Mungall K.L."/>
            <person name="Oliver K."/>
            <person name="Price C."/>
            <person name="Quail M.A."/>
            <person name="Urushihara H."/>
            <person name="Hernandez J."/>
            <person name="Rabbinowitsch E."/>
            <person name="Steffen D."/>
            <person name="Sanders M."/>
            <person name="Ma J."/>
            <person name="Kohara Y."/>
            <person name="Sharp S."/>
            <person name="Simmonds M.N."/>
            <person name="Spiegler S."/>
            <person name="Tivey A."/>
            <person name="Sugano S."/>
            <person name="White B."/>
            <person name="Walker D."/>
            <person name="Woodward J.R."/>
            <person name="Winckler T."/>
            <person name="Tanaka Y."/>
            <person name="Shaulsky G."/>
            <person name="Schleicher M."/>
            <person name="Weinstock G.M."/>
            <person name="Rosenthal A."/>
            <person name="Cox E.C."/>
            <person name="Chisholm R.L."/>
            <person name="Gibbs R.A."/>
            <person name="Loomis W.F."/>
            <person name="Platzer M."/>
            <person name="Kay R.R."/>
            <person name="Williams J.G."/>
            <person name="Dear P.H."/>
            <person name="Noegel A.A."/>
            <person name="Barrell B.G."/>
            <person name="Kuspa A."/>
        </authorList>
    </citation>
    <scope>NUCLEOTIDE SEQUENCE [LARGE SCALE GENOMIC DNA]</scope>
    <source>
        <strain>AX4</strain>
    </source>
</reference>
<reference key="3">
    <citation type="journal article" date="2006" name="Mol. Cell. Proteomics">
        <title>Proteomics fingerprinting of phagosome maturation and evidence for the role of a Galpha during uptake.</title>
        <authorList>
            <person name="Gotthardt D."/>
            <person name="Blancheteau V."/>
            <person name="Bosserhoff A."/>
            <person name="Ruppert T."/>
            <person name="Delorenzi M."/>
            <person name="Soldati T."/>
        </authorList>
    </citation>
    <scope>IDENTIFICATION BY MASS SPECTROMETRY [LARGE SCALE ANALYSIS]</scope>
    <source>
        <strain>AX2</strain>
    </source>
</reference>
<name>PCKA_DICDI</name>
<sequence length="562" mass="62570">MNQAVAESINKSLKSSTADYTPKGYHITELESDSIYLDEHFSGNAKIFHNPAVAVLYEQALAFEHGSAITSTGALVTRSGVKTGRSPKDKRIVKEPSSQDDIWWGPVNIAMDDLSFMINRERAIDYLNTQEKIYVIDGYAGWDPKYRIKVRVICARAYHALFMHNMLIRPANREELRNFGEPDYTIYNAGQFPANRYTKGMSSSSSIAIDFARKEMVILGTQYAGEMKKGILTIMMYLMPKMGVLPLHSSCNQARNNGDTTLFFGLSGTGKTTLSADINRELIGDDEHVWTDTGCFNIEGGCYAKCIDLSREKEPEIFDAIKFGAVLENVVYNEYSRKVDYNDVSITENTRCAYPLEHIPNAKFPAIAGHPKNIIMLTCDAFGILPPVSRLDANQVMYHFIQGYTAKVAGTEVGVTEPTATFSSCYGEPFIVWHPTKYAEMLASQLHKHSARAWLINTGWTGGSHGVGSRIKLAYTRAIIDAIHSGELEKIPTTKMDVFGFQVPNSCPGVPSEILMPINGWADKEKYVSTMHKLAKLFIENFKKFQDKASPELVAAGPILPQ</sequence>
<accession>Q75JD5</accession>
<accession>Q55AN2</accession>
<dbReference type="EC" id="4.1.1.49"/>
<dbReference type="EMBL" id="AAFI02000006">
    <property type="protein sequence ID" value="EAL71529.1"/>
    <property type="molecule type" value="Genomic_DNA"/>
</dbReference>
<dbReference type="RefSeq" id="XP_645490.1">
    <property type="nucleotide sequence ID" value="XM_640398.1"/>
</dbReference>
<dbReference type="SMR" id="Q75JD5"/>
<dbReference type="FunCoup" id="Q75JD5">
    <property type="interactions" value="198"/>
</dbReference>
<dbReference type="STRING" id="44689.Q75JD5"/>
<dbReference type="PaxDb" id="44689-DDB0231108"/>
<dbReference type="EnsemblProtists" id="EAL71529">
    <property type="protein sequence ID" value="EAL71529"/>
    <property type="gene ID" value="DDB_G0271678"/>
</dbReference>
<dbReference type="GeneID" id="8618118"/>
<dbReference type="KEGG" id="ddi:DDB_G0271678"/>
<dbReference type="dictyBase" id="DDB_G0271678">
    <property type="gene designation" value="pckA"/>
</dbReference>
<dbReference type="VEuPathDB" id="AmoebaDB:DDB_G0271678"/>
<dbReference type="eggNOG" id="ENOG502QQI5">
    <property type="taxonomic scope" value="Eukaryota"/>
</dbReference>
<dbReference type="HOGENOM" id="CLU_018247_0_1_1"/>
<dbReference type="InParanoid" id="Q75JD5"/>
<dbReference type="OMA" id="VTIKHNP"/>
<dbReference type="PhylomeDB" id="Q75JD5"/>
<dbReference type="UniPathway" id="UPA00138"/>
<dbReference type="PRO" id="PR:Q75JD5"/>
<dbReference type="Proteomes" id="UP000002195">
    <property type="component" value="Chromosome 2"/>
</dbReference>
<dbReference type="GO" id="GO:0005829">
    <property type="term" value="C:cytosol"/>
    <property type="evidence" value="ECO:0000318"/>
    <property type="project" value="GO_Central"/>
</dbReference>
<dbReference type="GO" id="GO:0045335">
    <property type="term" value="C:phagocytic vesicle"/>
    <property type="evidence" value="ECO:0007005"/>
    <property type="project" value="dictyBase"/>
</dbReference>
<dbReference type="GO" id="GO:0005524">
    <property type="term" value="F:ATP binding"/>
    <property type="evidence" value="ECO:0007669"/>
    <property type="project" value="UniProtKB-KW"/>
</dbReference>
<dbReference type="GO" id="GO:0004612">
    <property type="term" value="F:phosphoenolpyruvate carboxykinase (ATP) activity"/>
    <property type="evidence" value="ECO:0000318"/>
    <property type="project" value="GO_Central"/>
</dbReference>
<dbReference type="GO" id="GO:0006094">
    <property type="term" value="P:gluconeogenesis"/>
    <property type="evidence" value="ECO:0000318"/>
    <property type="project" value="GO_Central"/>
</dbReference>
<dbReference type="CDD" id="cd00484">
    <property type="entry name" value="PEPCK_ATP"/>
    <property type="match status" value="1"/>
</dbReference>
<dbReference type="FunFam" id="2.170.8.10:FF:000001">
    <property type="entry name" value="Phosphoenolpyruvate carboxykinase (ATP)"/>
    <property type="match status" value="1"/>
</dbReference>
<dbReference type="FunFam" id="3.40.449.10:FF:000002">
    <property type="entry name" value="Phosphoenolpyruvate carboxykinase [ATP]"/>
    <property type="match status" value="1"/>
</dbReference>
<dbReference type="Gene3D" id="3.90.228.20">
    <property type="match status" value="1"/>
</dbReference>
<dbReference type="Gene3D" id="3.40.449.10">
    <property type="entry name" value="Phosphoenolpyruvate Carboxykinase, domain 1"/>
    <property type="match status" value="1"/>
</dbReference>
<dbReference type="Gene3D" id="2.170.8.10">
    <property type="entry name" value="Phosphoenolpyruvate Carboxykinase, domain 2"/>
    <property type="match status" value="1"/>
</dbReference>
<dbReference type="HAMAP" id="MF_00453">
    <property type="entry name" value="PEPCK_ATP"/>
    <property type="match status" value="1"/>
</dbReference>
<dbReference type="InterPro" id="IPR001272">
    <property type="entry name" value="PEP_carboxykinase_ATP"/>
</dbReference>
<dbReference type="InterPro" id="IPR013035">
    <property type="entry name" value="PEP_carboxykinase_C"/>
</dbReference>
<dbReference type="InterPro" id="IPR008210">
    <property type="entry name" value="PEP_carboxykinase_N"/>
</dbReference>
<dbReference type="NCBIfam" id="TIGR00224">
    <property type="entry name" value="pckA"/>
    <property type="match status" value="1"/>
</dbReference>
<dbReference type="NCBIfam" id="NF006820">
    <property type="entry name" value="PRK09344.1-2"/>
    <property type="match status" value="1"/>
</dbReference>
<dbReference type="NCBIfam" id="NF006821">
    <property type="entry name" value="PRK09344.1-3"/>
    <property type="match status" value="1"/>
</dbReference>
<dbReference type="PANTHER" id="PTHR30031:SF0">
    <property type="entry name" value="PHOSPHOENOLPYRUVATE CARBOXYKINASE (ATP)"/>
    <property type="match status" value="1"/>
</dbReference>
<dbReference type="PANTHER" id="PTHR30031">
    <property type="entry name" value="PHOSPHOENOLPYRUVATE CARBOXYKINASE ATP"/>
    <property type="match status" value="1"/>
</dbReference>
<dbReference type="Pfam" id="PF01293">
    <property type="entry name" value="PEPCK_ATP"/>
    <property type="match status" value="1"/>
</dbReference>
<dbReference type="PIRSF" id="PIRSF006294">
    <property type="entry name" value="PEP_crbxkin"/>
    <property type="match status" value="1"/>
</dbReference>
<dbReference type="SUPFAM" id="SSF68923">
    <property type="entry name" value="PEP carboxykinase N-terminal domain"/>
    <property type="match status" value="1"/>
</dbReference>
<dbReference type="SUPFAM" id="SSF53795">
    <property type="entry name" value="PEP carboxykinase-like"/>
    <property type="match status" value="1"/>
</dbReference>
<feature type="chain" id="PRO_0000327804" description="Phosphoenolpyruvate carboxykinase (ATP)">
    <location>
        <begin position="1"/>
        <end position="562"/>
    </location>
</feature>
<feature type="binding site" evidence="1">
    <location>
        <begin position="265"/>
        <end position="272"/>
    </location>
    <ligand>
        <name>ATP</name>
        <dbReference type="ChEBI" id="CHEBI:30616"/>
    </ligand>
</feature>
<protein>
    <recommendedName>
        <fullName>Phosphoenolpyruvate carboxykinase (ATP)</fullName>
        <ecNumber>4.1.1.49</ecNumber>
    </recommendedName>
</protein>
<gene>
    <name type="primary">pckA</name>
    <name type="ORF">DDB_G0271678</name>
</gene>
<proteinExistence type="evidence at protein level"/>
<comment type="catalytic activity">
    <reaction>
        <text>oxaloacetate + ATP = phosphoenolpyruvate + ADP + CO2</text>
        <dbReference type="Rhea" id="RHEA:18617"/>
        <dbReference type="ChEBI" id="CHEBI:16452"/>
        <dbReference type="ChEBI" id="CHEBI:16526"/>
        <dbReference type="ChEBI" id="CHEBI:30616"/>
        <dbReference type="ChEBI" id="CHEBI:58702"/>
        <dbReference type="ChEBI" id="CHEBI:456216"/>
        <dbReference type="EC" id="4.1.1.49"/>
    </reaction>
</comment>
<comment type="pathway">
    <text>Carbohydrate biosynthesis; gluconeogenesis.</text>
</comment>
<comment type="similarity">
    <text evidence="2">Belongs to the phosphoenolpyruvate carboxykinase (ATP) family.</text>
</comment>